<name>YOHO_ESCF3</name>
<keyword id="KW-0997">Cell inner membrane</keyword>
<keyword id="KW-1003">Cell membrane</keyword>
<keyword id="KW-0472">Membrane</keyword>
<keyword id="KW-0812">Transmembrane</keyword>
<keyword id="KW-1133">Transmembrane helix</keyword>
<comment type="subcellular location">
    <subcellularLocation>
        <location evidence="1">Cell inner membrane</location>
        <topology evidence="1">Single-pass membrane protein</topology>
    </subcellularLocation>
</comment>
<comment type="similarity">
    <text evidence="1">Belongs to the UPF0387 family.</text>
</comment>
<gene>
    <name evidence="1" type="primary">yohO</name>
    <name type="ordered locus">EFER_2214</name>
</gene>
<dbReference type="EMBL" id="CU928158">
    <property type="protein sequence ID" value="CAQ89716.1"/>
    <property type="molecule type" value="Genomic_DNA"/>
</dbReference>
<dbReference type="RefSeq" id="WP_001216963.1">
    <property type="nucleotide sequence ID" value="NC_011740.1"/>
</dbReference>
<dbReference type="KEGG" id="efe:EFER_2214"/>
<dbReference type="HOGENOM" id="CLU_220259_0_0_6"/>
<dbReference type="OrthoDB" id="6548946at2"/>
<dbReference type="Proteomes" id="UP000000745">
    <property type="component" value="Chromosome"/>
</dbReference>
<dbReference type="GO" id="GO:0005886">
    <property type="term" value="C:plasma membrane"/>
    <property type="evidence" value="ECO:0007669"/>
    <property type="project" value="UniProtKB-SubCell"/>
</dbReference>
<dbReference type="HAMAP" id="MF_01362">
    <property type="entry name" value="UPF0387"/>
    <property type="match status" value="1"/>
</dbReference>
<dbReference type="InterPro" id="IPR020870">
    <property type="entry name" value="UPF0387_membrane"/>
</dbReference>
<dbReference type="NCBIfam" id="NF010225">
    <property type="entry name" value="PRK13681.1"/>
    <property type="match status" value="1"/>
</dbReference>
<evidence type="ECO:0000255" key="1">
    <source>
        <dbReference type="HAMAP-Rule" id="MF_01362"/>
    </source>
</evidence>
<organism>
    <name type="scientific">Escherichia fergusonii (strain ATCC 35469 / DSM 13698 / CCUG 18766 / IAM 14443 / JCM 21226 / LMG 7866 / NBRC 102419 / NCTC 12128 / CDC 0568-73)</name>
    <dbReference type="NCBI Taxonomy" id="585054"/>
    <lineage>
        <taxon>Bacteria</taxon>
        <taxon>Pseudomonadati</taxon>
        <taxon>Pseudomonadota</taxon>
        <taxon>Gammaproteobacteria</taxon>
        <taxon>Enterobacterales</taxon>
        <taxon>Enterobacteriaceae</taxon>
        <taxon>Escherichia</taxon>
    </lineage>
</organism>
<sequence>MRIAKIGVIALFLFMALGGIGGVMLAGYTFILRAG</sequence>
<proteinExistence type="inferred from homology"/>
<feature type="chain" id="PRO_1000143735" description="UPF0387 membrane protein YohO">
    <location>
        <begin position="1"/>
        <end position="35"/>
    </location>
</feature>
<feature type="transmembrane region" description="Helical" evidence="1">
    <location>
        <begin position="6"/>
        <end position="26"/>
    </location>
</feature>
<reference key="1">
    <citation type="journal article" date="2009" name="PLoS Genet.">
        <title>Organised genome dynamics in the Escherichia coli species results in highly diverse adaptive paths.</title>
        <authorList>
            <person name="Touchon M."/>
            <person name="Hoede C."/>
            <person name="Tenaillon O."/>
            <person name="Barbe V."/>
            <person name="Baeriswyl S."/>
            <person name="Bidet P."/>
            <person name="Bingen E."/>
            <person name="Bonacorsi S."/>
            <person name="Bouchier C."/>
            <person name="Bouvet O."/>
            <person name="Calteau A."/>
            <person name="Chiapello H."/>
            <person name="Clermont O."/>
            <person name="Cruveiller S."/>
            <person name="Danchin A."/>
            <person name="Diard M."/>
            <person name="Dossat C."/>
            <person name="Karoui M.E."/>
            <person name="Frapy E."/>
            <person name="Garry L."/>
            <person name="Ghigo J.M."/>
            <person name="Gilles A.M."/>
            <person name="Johnson J."/>
            <person name="Le Bouguenec C."/>
            <person name="Lescat M."/>
            <person name="Mangenot S."/>
            <person name="Martinez-Jehanne V."/>
            <person name="Matic I."/>
            <person name="Nassif X."/>
            <person name="Oztas S."/>
            <person name="Petit M.A."/>
            <person name="Pichon C."/>
            <person name="Rouy Z."/>
            <person name="Ruf C.S."/>
            <person name="Schneider D."/>
            <person name="Tourret J."/>
            <person name="Vacherie B."/>
            <person name="Vallenet D."/>
            <person name="Medigue C."/>
            <person name="Rocha E.P.C."/>
            <person name="Denamur E."/>
        </authorList>
    </citation>
    <scope>NUCLEOTIDE SEQUENCE [LARGE SCALE GENOMIC DNA]</scope>
    <source>
        <strain>ATCC 35469 / DSM 13698 / BCRC 15582 / CCUG 18766 / IAM 14443 / JCM 21226 / LMG 7866 / NBRC 102419 / NCTC 12128 / CDC 0568-73</strain>
    </source>
</reference>
<protein>
    <recommendedName>
        <fullName evidence="1">UPF0387 membrane protein YohO</fullName>
    </recommendedName>
</protein>
<accession>B7LV89</accession>